<reference key="1">
    <citation type="journal article" date="2002" name="Lancet">
        <title>Genome and virulence determinants of high virulence community-acquired MRSA.</title>
        <authorList>
            <person name="Baba T."/>
            <person name="Takeuchi F."/>
            <person name="Kuroda M."/>
            <person name="Yuzawa H."/>
            <person name="Aoki K."/>
            <person name="Oguchi A."/>
            <person name="Nagai Y."/>
            <person name="Iwama N."/>
            <person name="Asano K."/>
            <person name="Naimi T."/>
            <person name="Kuroda H."/>
            <person name="Cui L."/>
            <person name="Yamamoto K."/>
            <person name="Hiramatsu K."/>
        </authorList>
    </citation>
    <scope>NUCLEOTIDE SEQUENCE [LARGE SCALE GENOMIC DNA]</scope>
    <source>
        <strain>MW2</strain>
    </source>
</reference>
<feature type="chain" id="PRO_0000272006" description="Bacilliredoxin MW1467">
    <location>
        <begin position="1"/>
        <end position="145"/>
    </location>
</feature>
<sequence>MDMNFDLYMNGVVEQARNEIESAGYEQLTTAEDVDKVLKQDGTTLVMINSVCGCAGGIARPAASHALHYDVLPDRLVTVFAGQDKEATQRAREYFEGYAPSSPSFALVKDGKITEMIERHQIEGHDVMNVINQLQTLFNKYCEER</sequence>
<proteinExistence type="inferred from homology"/>
<comment type="similarity">
    <text evidence="1">Belongs to the bacilliredoxin family.</text>
</comment>
<evidence type="ECO:0000305" key="1"/>
<organism>
    <name type="scientific">Staphylococcus aureus (strain MW2)</name>
    <dbReference type="NCBI Taxonomy" id="196620"/>
    <lineage>
        <taxon>Bacteria</taxon>
        <taxon>Bacillati</taxon>
        <taxon>Bacillota</taxon>
        <taxon>Bacilli</taxon>
        <taxon>Bacillales</taxon>
        <taxon>Staphylococcaceae</taxon>
        <taxon>Staphylococcus</taxon>
    </lineage>
</organism>
<protein>
    <recommendedName>
        <fullName evidence="1">Bacilliredoxin MW1467</fullName>
    </recommendedName>
</protein>
<accession>Q7A0T9</accession>
<gene>
    <name type="ordered locus">MW1467</name>
</gene>
<dbReference type="EMBL" id="BA000033">
    <property type="protein sequence ID" value="BAB95332.1"/>
    <property type="molecule type" value="Genomic_DNA"/>
</dbReference>
<dbReference type="SMR" id="Q7A0T9"/>
<dbReference type="KEGG" id="sam:MW1467"/>
<dbReference type="HOGENOM" id="CLU_132521_0_0_9"/>
<dbReference type="GO" id="GO:0045454">
    <property type="term" value="P:cell redox homeostasis"/>
    <property type="evidence" value="ECO:0000250"/>
    <property type="project" value="UniProtKB"/>
</dbReference>
<dbReference type="Gene3D" id="3.40.30.10">
    <property type="entry name" value="Glutaredoxin"/>
    <property type="match status" value="1"/>
</dbReference>
<dbReference type="InterPro" id="IPR009474">
    <property type="entry name" value="BrxB/BrxA"/>
</dbReference>
<dbReference type="NCBIfam" id="TIGR04191">
    <property type="entry name" value="YphP_YqiW"/>
    <property type="match status" value="1"/>
</dbReference>
<dbReference type="PANTHER" id="PTHR40052:SF1">
    <property type="entry name" value="BACILLIREDOXIN BRXB"/>
    <property type="match status" value="1"/>
</dbReference>
<dbReference type="PANTHER" id="PTHR40052">
    <property type="entry name" value="UPF0403 PROTEIN YQIW-RELATED"/>
    <property type="match status" value="1"/>
</dbReference>
<dbReference type="Pfam" id="PF06491">
    <property type="entry name" value="Disulph_isomer"/>
    <property type="match status" value="1"/>
</dbReference>
<name>Y1467_STAAW</name>